<proteinExistence type="evidence at transcript level"/>
<comment type="function">
    <text evidence="1 3">Dermonecrotic toxins cleave the phosphodiester linkage between the phosphate and headgroup of certain phospholipids (sphingolipid and lysolipid substrates), forming an alcohol (often choline) and a cyclic phosphate (By similarity). This toxin acts on sphingomyelin (SM) (By similarity). It may also act on ceramide phosphoethanolamine (CPE), lysophosphatidylcholine (LPC) and lysophosphatidylethanolamine (LPE), but not on lysophosphatidylserine (LPS), and lysophosphatidylglycerol (LPG) (By similarity). It acts by transphosphatidylation, releasing exclusively cyclic phosphate products as second products (By similarity). Induces dermonecrosis, hemolysis, increased vascular permeability, edema, inflammatory response, and platelet aggregation (By similarity).</text>
</comment>
<comment type="catalytic activity">
    <reaction evidence="1">
        <text>an N-(acyl)-sphingosylphosphocholine = an N-(acyl)-sphingosyl-1,3-cyclic phosphate + choline</text>
        <dbReference type="Rhea" id="RHEA:60652"/>
        <dbReference type="ChEBI" id="CHEBI:15354"/>
        <dbReference type="ChEBI" id="CHEBI:64583"/>
        <dbReference type="ChEBI" id="CHEBI:143892"/>
    </reaction>
</comment>
<comment type="catalytic activity">
    <reaction evidence="1">
        <text>an N-(acyl)-sphingosylphosphoethanolamine = an N-(acyl)-sphingosyl-1,3-cyclic phosphate + ethanolamine</text>
        <dbReference type="Rhea" id="RHEA:60648"/>
        <dbReference type="ChEBI" id="CHEBI:57603"/>
        <dbReference type="ChEBI" id="CHEBI:143891"/>
        <dbReference type="ChEBI" id="CHEBI:143892"/>
    </reaction>
</comment>
<comment type="catalytic activity">
    <reaction evidence="1">
        <text>a 1-acyl-sn-glycero-3-phosphocholine = a 1-acyl-sn-glycero-2,3-cyclic phosphate + choline</text>
        <dbReference type="Rhea" id="RHEA:60700"/>
        <dbReference type="ChEBI" id="CHEBI:15354"/>
        <dbReference type="ChEBI" id="CHEBI:58168"/>
        <dbReference type="ChEBI" id="CHEBI:143947"/>
    </reaction>
</comment>
<comment type="catalytic activity">
    <reaction evidence="1">
        <text>a 1-acyl-sn-glycero-3-phosphoethanolamine = a 1-acyl-sn-glycero-2,3-cyclic phosphate + ethanolamine</text>
        <dbReference type="Rhea" id="RHEA:60704"/>
        <dbReference type="ChEBI" id="CHEBI:57603"/>
        <dbReference type="ChEBI" id="CHEBI:64381"/>
        <dbReference type="ChEBI" id="CHEBI:143947"/>
    </reaction>
</comment>
<comment type="cofactor">
    <cofactor evidence="5">
        <name>Mg(2+)</name>
        <dbReference type="ChEBI" id="CHEBI:18420"/>
    </cofactor>
    <text evidence="5">Binds 1 Mg(2+) ion per subunit.</text>
</comment>
<comment type="subcellular location">
    <subcellularLocation>
        <location evidence="8">Secreted</location>
    </subcellularLocation>
</comment>
<comment type="tissue specificity">
    <text evidence="8">Expressed by the venom gland.</text>
</comment>
<comment type="similarity">
    <text evidence="7">Belongs to the arthropod phospholipase D family. Class II subfamily.</text>
</comment>
<comment type="caution">
    <text evidence="1 2 4">The most common activity assay for dermonecrotic toxins detects enzymatic activity by monitoring choline release from substrate. Liberation of choline from sphingomyelin (SM) or lysophosphatidylcholine (LPC) is commonly assumed to result from substrate hydrolysis, giving either ceramide-1-phosphate (C1P) or lysophosphatidic acid (LPA), respectively, as a second product. However, two studies from Lajoie and colleagues (2013 and 2015) report the observation of exclusive formation of cyclic phosphate products as second products, resulting from intramolecular transphosphatidylation. Cyclic phosphates have vastly different biological properties from their monoester counterparts, and they may be relevant to the pathology of brown spider envenomation.</text>
</comment>
<organism>
    <name type="scientific">Loxosceles spinulosa</name>
    <name type="common">Recluse spider</name>
    <dbReference type="NCBI Taxonomy" id="571532"/>
    <lineage>
        <taxon>Eukaryota</taxon>
        <taxon>Metazoa</taxon>
        <taxon>Ecdysozoa</taxon>
        <taxon>Arthropoda</taxon>
        <taxon>Chelicerata</taxon>
        <taxon>Arachnida</taxon>
        <taxon>Araneae</taxon>
        <taxon>Araneomorphae</taxon>
        <taxon>Haplogynae</taxon>
        <taxon>Scytodoidea</taxon>
        <taxon>Sicariidae</taxon>
        <taxon>Loxosceles</taxon>
    </lineage>
</organism>
<feature type="chain" id="PRO_0000392857" description="Dermonecrotic toxin LspiSicTox-betaIE1ii">
    <location>
        <begin position="1" status="less than"/>
        <end position="273"/>
    </location>
</feature>
<feature type="active site" evidence="5">
    <location>
        <position position="5"/>
    </location>
</feature>
<feature type="active site" description="Nucleophile" evidence="5">
    <location>
        <position position="41"/>
    </location>
</feature>
<feature type="binding site" evidence="5">
    <location>
        <position position="25"/>
    </location>
    <ligand>
        <name>Mg(2+)</name>
        <dbReference type="ChEBI" id="CHEBI:18420"/>
    </ligand>
</feature>
<feature type="binding site" evidence="5">
    <location>
        <position position="27"/>
    </location>
    <ligand>
        <name>Mg(2+)</name>
        <dbReference type="ChEBI" id="CHEBI:18420"/>
    </ligand>
</feature>
<feature type="binding site" evidence="5">
    <location>
        <position position="85"/>
    </location>
    <ligand>
        <name>Mg(2+)</name>
        <dbReference type="ChEBI" id="CHEBI:18420"/>
    </ligand>
</feature>
<feature type="disulfide bond" evidence="3">
    <location>
        <begin position="45"/>
        <end position="51"/>
    </location>
</feature>
<feature type="disulfide bond" evidence="3">
    <location>
        <begin position="47"/>
        <end position="189"/>
    </location>
</feature>
<feature type="non-terminal residue">
    <location>
        <position position="1"/>
    </location>
</feature>
<dbReference type="EC" id="4.6.1.-" evidence="4"/>
<dbReference type="EMBL" id="FJ171485">
    <property type="protein sequence ID" value="ACN48981.1"/>
    <property type="molecule type" value="mRNA"/>
</dbReference>
<dbReference type="SMR" id="C0JB50"/>
<dbReference type="GO" id="GO:0005576">
    <property type="term" value="C:extracellular region"/>
    <property type="evidence" value="ECO:0007669"/>
    <property type="project" value="UniProtKB-SubCell"/>
</dbReference>
<dbReference type="GO" id="GO:0016829">
    <property type="term" value="F:lyase activity"/>
    <property type="evidence" value="ECO:0007669"/>
    <property type="project" value="UniProtKB-KW"/>
</dbReference>
<dbReference type="GO" id="GO:0046872">
    <property type="term" value="F:metal ion binding"/>
    <property type="evidence" value="ECO:0007669"/>
    <property type="project" value="UniProtKB-KW"/>
</dbReference>
<dbReference type="GO" id="GO:0008081">
    <property type="term" value="F:phosphoric diester hydrolase activity"/>
    <property type="evidence" value="ECO:0007669"/>
    <property type="project" value="InterPro"/>
</dbReference>
<dbReference type="GO" id="GO:0090729">
    <property type="term" value="F:toxin activity"/>
    <property type="evidence" value="ECO:0007669"/>
    <property type="project" value="UniProtKB-KW"/>
</dbReference>
<dbReference type="GO" id="GO:0031640">
    <property type="term" value="P:killing of cells of another organism"/>
    <property type="evidence" value="ECO:0007669"/>
    <property type="project" value="UniProtKB-KW"/>
</dbReference>
<dbReference type="GO" id="GO:0016042">
    <property type="term" value="P:lipid catabolic process"/>
    <property type="evidence" value="ECO:0007669"/>
    <property type="project" value="UniProtKB-KW"/>
</dbReference>
<dbReference type="CDD" id="cd08576">
    <property type="entry name" value="GDPD_like_SMaseD_PLD"/>
    <property type="match status" value="1"/>
</dbReference>
<dbReference type="Gene3D" id="3.20.20.190">
    <property type="entry name" value="Phosphatidylinositol (PI) phosphodiesterase"/>
    <property type="match status" value="1"/>
</dbReference>
<dbReference type="InterPro" id="IPR017946">
    <property type="entry name" value="PLC-like_Pdiesterase_TIM-brl"/>
</dbReference>
<dbReference type="Pfam" id="PF13653">
    <property type="entry name" value="GDPD_2"/>
    <property type="match status" value="1"/>
</dbReference>
<dbReference type="SUPFAM" id="SSF51695">
    <property type="entry name" value="PLC-like phosphodiesterases"/>
    <property type="match status" value="1"/>
</dbReference>
<name>B1R2_LOXSN</name>
<accession>C0JB50</accession>
<evidence type="ECO:0000250" key="1">
    <source>
        <dbReference type="UniProtKB" id="A0A0D4WTV1"/>
    </source>
</evidence>
<evidence type="ECO:0000250" key="2">
    <source>
        <dbReference type="UniProtKB" id="A0A0D4WV12"/>
    </source>
</evidence>
<evidence type="ECO:0000250" key="3">
    <source>
        <dbReference type="UniProtKB" id="P0CE80"/>
    </source>
</evidence>
<evidence type="ECO:0000250" key="4">
    <source>
        <dbReference type="UniProtKB" id="Q4ZFU2"/>
    </source>
</evidence>
<evidence type="ECO:0000250" key="5">
    <source>
        <dbReference type="UniProtKB" id="Q8I914"/>
    </source>
</evidence>
<evidence type="ECO:0000303" key="6">
    <source>
    </source>
</evidence>
<evidence type="ECO:0000305" key="7"/>
<evidence type="ECO:0000305" key="8">
    <source>
    </source>
</evidence>
<sequence>FALAHMVNDLEMVDEFVGKGANGLEIDVTFSSSGQPQYTYHGVPCDCFRSCKRREDFDTYIKYIRHLTTPGDPKFRSNLIMLIFDLKLNGLSQDALRKAGVEMADKLVGNYWQDLAEARAYIVLSMPSIEQSAFVTAFKDELKDFGYDKNLDRIGYDFSGNEDLDETAKVYKQLNINGHIWQADGITNCLPRGDSRLKEAISKRDTPGYQYINKVYTWTIDKASSIANALRLGVDGVMTNYPERVIDALNDSEFSGKFRLATYEDNPWETFKG</sequence>
<keyword id="KW-0204">Cytolysis</keyword>
<keyword id="KW-1061">Dermonecrotic toxin</keyword>
<keyword id="KW-1015">Disulfide bond</keyword>
<keyword id="KW-0354">Hemolysis</keyword>
<keyword id="KW-0442">Lipid degradation</keyword>
<keyword id="KW-0443">Lipid metabolism</keyword>
<keyword id="KW-0456">Lyase</keyword>
<keyword id="KW-0460">Magnesium</keyword>
<keyword id="KW-0479">Metal-binding</keyword>
<keyword id="KW-0964">Secreted</keyword>
<keyword id="KW-0800">Toxin</keyword>
<reference key="1">
    <citation type="journal article" date="2009" name="Mol. Biol. Evol.">
        <title>Molecular evolution, functional variation, and proposed nomenclature of the gene family that includes sphingomyelinase D in sicariid spider venoms.</title>
        <authorList>
            <person name="Binford G.J."/>
            <person name="Bodner M.R."/>
            <person name="Cordes M.H."/>
            <person name="Baldwin K.L."/>
            <person name="Rynerson M.R."/>
            <person name="Burns S.N."/>
            <person name="Zobel-Thropp P.A."/>
        </authorList>
    </citation>
    <scope>NUCLEOTIDE SEQUENCE [MRNA]</scope>
    <scope>NOMENCLATURE</scope>
    <source>
        <strain>Borakalalo</strain>
        <tissue>Venom gland</tissue>
    </source>
</reference>
<protein>
    <recommendedName>
        <fullName evidence="6">Dermonecrotic toxin LspiSicTox-betaIE1ii</fullName>
        <ecNumber evidence="4">4.6.1.-</ecNumber>
    </recommendedName>
    <alternativeName>
        <fullName>Phospholipase D</fullName>
        <shortName>PLD</shortName>
    </alternativeName>
    <alternativeName>
        <fullName>Sphingomyelin phosphodiesterase D</fullName>
        <shortName>SMD</shortName>
        <shortName>SMase D</shortName>
        <shortName>Sphingomyelinase D</shortName>
    </alternativeName>
</protein>